<reference key="1">
    <citation type="journal article" date="2006" name="Mol. Microbiol.">
        <title>Role of pathogenicity island-associated integrases in the genome plasticity of uropathogenic Escherichia coli strain 536.</title>
        <authorList>
            <person name="Hochhut B."/>
            <person name="Wilde C."/>
            <person name="Balling G."/>
            <person name="Middendorf B."/>
            <person name="Dobrindt U."/>
            <person name="Brzuszkiewicz E."/>
            <person name="Gottschalk G."/>
            <person name="Carniel E."/>
            <person name="Hacker J."/>
        </authorList>
    </citation>
    <scope>NUCLEOTIDE SEQUENCE [LARGE SCALE GENOMIC DNA]</scope>
    <source>
        <strain>536 / UPEC</strain>
    </source>
</reference>
<keyword id="KW-0238">DNA-binding</keyword>
<keyword id="KW-0678">Repressor</keyword>
<keyword id="KW-0804">Transcription</keyword>
<keyword id="KW-0805">Transcription regulation</keyword>
<evidence type="ECO:0000250" key="1"/>
<evidence type="ECO:0000255" key="2">
    <source>
        <dbReference type="PROSITE-ProRule" id="PRU00393"/>
    </source>
</evidence>
<evidence type="ECO:0000255" key="3">
    <source>
        <dbReference type="PROSITE-ProRule" id="PRU00394"/>
    </source>
</evidence>
<protein>
    <recommendedName>
        <fullName>HTH-type transcriptional repressor AllR</fullName>
    </recommendedName>
    <alternativeName>
        <fullName>Negative regulator of allantoin and glyoxylate utilization operons</fullName>
    </alternativeName>
</protein>
<sequence length="271" mass="29270">MTEVRRRGRPGQAEPVAQKGAQALERGIAILQYLEKSGGSSSVSDISLNLDLPLSTTFRLLKVLQAADFVYQDSQLGWWHIGLGVFNVGAAYIHNRDVLSVAGPFMRRLMLLSGETVNVAIRNGNEAVLIGQLECKSMVRMCAPLGSRLPLHASGAGKALLYPLAEEELMSIILQTGLQQFTPTTLVDMPTLLKDLEQARELGYTVDKEEHVVGLNCIASAIYDDVGSVVAAISISGPSSRLTEDRFVSQGELVRDTARDISTALGLKAHP</sequence>
<accession>Q0TKD5</accession>
<gene>
    <name type="primary">allR</name>
    <name type="ordered locus">ECP_0567</name>
</gene>
<name>ALLR_ECOL5</name>
<organism>
    <name type="scientific">Escherichia coli O6:K15:H31 (strain 536 / UPEC)</name>
    <dbReference type="NCBI Taxonomy" id="362663"/>
    <lineage>
        <taxon>Bacteria</taxon>
        <taxon>Pseudomonadati</taxon>
        <taxon>Pseudomonadota</taxon>
        <taxon>Gammaproteobacteria</taxon>
        <taxon>Enterobacterales</taxon>
        <taxon>Enterobacteriaceae</taxon>
        <taxon>Escherichia</taxon>
    </lineage>
</organism>
<dbReference type="EMBL" id="CP000247">
    <property type="protein sequence ID" value="ABG68596.1"/>
    <property type="molecule type" value="Genomic_DNA"/>
</dbReference>
<dbReference type="RefSeq" id="WP_000141275.1">
    <property type="nucleotide sequence ID" value="NC_008253.1"/>
</dbReference>
<dbReference type="SMR" id="Q0TKD5"/>
<dbReference type="GeneID" id="86945421"/>
<dbReference type="KEGG" id="ecp:ECP_0567"/>
<dbReference type="HOGENOM" id="CLU_062618_7_1_6"/>
<dbReference type="Proteomes" id="UP000009182">
    <property type="component" value="Chromosome"/>
</dbReference>
<dbReference type="GO" id="GO:0003677">
    <property type="term" value="F:DNA binding"/>
    <property type="evidence" value="ECO:0007669"/>
    <property type="project" value="UniProtKB-KW"/>
</dbReference>
<dbReference type="GO" id="GO:0003700">
    <property type="term" value="F:DNA-binding transcription factor activity"/>
    <property type="evidence" value="ECO:0007669"/>
    <property type="project" value="TreeGrafter"/>
</dbReference>
<dbReference type="GO" id="GO:0045892">
    <property type="term" value="P:negative regulation of DNA-templated transcription"/>
    <property type="evidence" value="ECO:0007669"/>
    <property type="project" value="TreeGrafter"/>
</dbReference>
<dbReference type="FunFam" id="1.10.10.10:FF:000198">
    <property type="entry name" value="HTH-type transcriptional repressor AllR"/>
    <property type="match status" value="1"/>
</dbReference>
<dbReference type="FunFam" id="3.30.450.40:FF:000017">
    <property type="entry name" value="HTH-type transcriptional repressor AllR"/>
    <property type="match status" value="1"/>
</dbReference>
<dbReference type="Gene3D" id="3.30.450.40">
    <property type="match status" value="1"/>
</dbReference>
<dbReference type="Gene3D" id="1.10.10.10">
    <property type="entry name" value="Winged helix-like DNA-binding domain superfamily/Winged helix DNA-binding domain"/>
    <property type="match status" value="1"/>
</dbReference>
<dbReference type="InterPro" id="IPR029016">
    <property type="entry name" value="GAF-like_dom_sf"/>
</dbReference>
<dbReference type="InterPro" id="IPR050707">
    <property type="entry name" value="HTH_MetabolicPath_Reg"/>
</dbReference>
<dbReference type="InterPro" id="IPR014757">
    <property type="entry name" value="Tscrpt_reg_IclR_C"/>
</dbReference>
<dbReference type="InterPro" id="IPR005471">
    <property type="entry name" value="Tscrpt_reg_IclR_N"/>
</dbReference>
<dbReference type="InterPro" id="IPR036388">
    <property type="entry name" value="WH-like_DNA-bd_sf"/>
</dbReference>
<dbReference type="InterPro" id="IPR036390">
    <property type="entry name" value="WH_DNA-bd_sf"/>
</dbReference>
<dbReference type="NCBIfam" id="NF007548">
    <property type="entry name" value="PRK10163.1"/>
    <property type="match status" value="1"/>
</dbReference>
<dbReference type="PANTHER" id="PTHR30136">
    <property type="entry name" value="HELIX-TURN-HELIX TRANSCRIPTIONAL REGULATOR, ICLR FAMILY"/>
    <property type="match status" value="1"/>
</dbReference>
<dbReference type="PANTHER" id="PTHR30136:SF24">
    <property type="entry name" value="HTH-TYPE TRANSCRIPTIONAL REPRESSOR ALLR"/>
    <property type="match status" value="1"/>
</dbReference>
<dbReference type="Pfam" id="PF09339">
    <property type="entry name" value="HTH_IclR"/>
    <property type="match status" value="1"/>
</dbReference>
<dbReference type="Pfam" id="PF01614">
    <property type="entry name" value="IclR_C"/>
    <property type="match status" value="1"/>
</dbReference>
<dbReference type="SMART" id="SM00346">
    <property type="entry name" value="HTH_ICLR"/>
    <property type="match status" value="1"/>
</dbReference>
<dbReference type="SUPFAM" id="SSF55781">
    <property type="entry name" value="GAF domain-like"/>
    <property type="match status" value="1"/>
</dbReference>
<dbReference type="SUPFAM" id="SSF46785">
    <property type="entry name" value="Winged helix' DNA-binding domain"/>
    <property type="match status" value="1"/>
</dbReference>
<dbReference type="PROSITE" id="PS51077">
    <property type="entry name" value="HTH_ICLR"/>
    <property type="match status" value="1"/>
</dbReference>
<dbReference type="PROSITE" id="PS51078">
    <property type="entry name" value="ICLR_ED"/>
    <property type="match status" value="1"/>
</dbReference>
<feature type="chain" id="PRO_0000313700" description="HTH-type transcriptional repressor AllR">
    <location>
        <begin position="1"/>
        <end position="271"/>
    </location>
</feature>
<feature type="domain" description="HTH iclR-type" evidence="2">
    <location>
        <begin position="21"/>
        <end position="83"/>
    </location>
</feature>
<feature type="domain" description="IclR-ED" evidence="3">
    <location>
        <begin position="98"/>
        <end position="267"/>
    </location>
</feature>
<feature type="DNA-binding region" description="H-T-H motif" evidence="2">
    <location>
        <begin position="43"/>
        <end position="62"/>
    </location>
</feature>
<feature type="binding site" evidence="1">
    <location>
        <begin position="154"/>
        <end position="156"/>
    </location>
    <ligand>
        <name>glyoxylate</name>
        <dbReference type="ChEBI" id="CHEBI:36655"/>
    </ligand>
</feature>
<feature type="binding site" evidence="1">
    <location>
        <position position="207"/>
    </location>
    <ligand>
        <name>glyoxylate</name>
        <dbReference type="ChEBI" id="CHEBI:36655"/>
    </ligand>
</feature>
<feature type="binding site" evidence="1">
    <location>
        <position position="217"/>
    </location>
    <ligand>
        <name>glyoxylate</name>
        <dbReference type="ChEBI" id="CHEBI:36655"/>
    </ligand>
</feature>
<feature type="binding site" evidence="1">
    <location>
        <begin position="234"/>
        <end position="236"/>
    </location>
    <ligand>
        <name>glyoxylate</name>
        <dbReference type="ChEBI" id="CHEBI:36655"/>
    </ligand>
</feature>
<comment type="function">
    <text evidence="1">Negative regulator of allantoin and glyoxylate utilization operons. Binds to the gcl promoter and to the allS-allA intergenic region (By similarity).</text>
</comment>
<proteinExistence type="inferred from homology"/>